<accession>A8A3I8</accession>
<keyword id="KW-0963">Cytoplasm</keyword>
<keyword id="KW-0274">FAD</keyword>
<keyword id="KW-0285">Flavoprotein</keyword>
<keyword id="KW-0520">NAD</keyword>
<keyword id="KW-0560">Oxidoreductase</keyword>
<name>NORW_ECOHS</name>
<proteinExistence type="inferred from homology"/>
<evidence type="ECO:0000255" key="1">
    <source>
        <dbReference type="HAMAP-Rule" id="MF_01313"/>
    </source>
</evidence>
<sequence length="377" mass="41348">MSNGIVIIGSGFAARQLVKNIRKQDASIPLTLIAADSMDEYNKPDLSHVISQGQRADDLTRQTAGEFAEQFNLHLFPQTWVTDIDAEARVVKSQNNQWQYDKLVLATGASAFVPPVPGRELMLTLNSQQEYRACETQLRDARRVLIVGGGLIGSELAMDFCRAGKAVTLIDNAASILASLMPPEVSSRLQHRLTEMGVHLLLKSQLQGLEKTDSGILATLDRQRSIEVDAVIAATGLRPETALARRAGLTINRGVCVDSYLQTSNTDIYALGDCAEINGQVLPFLQPIQLSAMVLAKNLLGNNTPLKLPAMLVKIKTPELPLHLAGETQRQDLRWQINTERQGMVARGVDDADQLRAFVVSEDRMKEAFGLLKTLPM</sequence>
<organism>
    <name type="scientific">Escherichia coli O9:H4 (strain HS)</name>
    <dbReference type="NCBI Taxonomy" id="331112"/>
    <lineage>
        <taxon>Bacteria</taxon>
        <taxon>Pseudomonadati</taxon>
        <taxon>Pseudomonadota</taxon>
        <taxon>Gammaproteobacteria</taxon>
        <taxon>Enterobacterales</taxon>
        <taxon>Enterobacteriaceae</taxon>
        <taxon>Escherichia</taxon>
    </lineage>
</organism>
<comment type="function">
    <text evidence="1">One of at least two accessory proteins for anaerobic nitric oxide (NO) reductase. Reduces the rubredoxin moiety of NO reductase.</text>
</comment>
<comment type="catalytic activity">
    <reaction evidence="1">
        <text>2 reduced [nitric oxide reductase rubredoxin domain] + NAD(+) + H(+) = 2 oxidized [nitric oxide reductase rubredoxin domain] + NADH</text>
        <dbReference type="Rhea" id="RHEA:42960"/>
        <dbReference type="Rhea" id="RHEA-COMP:10304"/>
        <dbReference type="Rhea" id="RHEA-COMP:10305"/>
        <dbReference type="ChEBI" id="CHEBI:15378"/>
        <dbReference type="ChEBI" id="CHEBI:29033"/>
        <dbReference type="ChEBI" id="CHEBI:29034"/>
        <dbReference type="ChEBI" id="CHEBI:57540"/>
        <dbReference type="ChEBI" id="CHEBI:57945"/>
    </reaction>
</comment>
<comment type="cofactor">
    <cofactor evidence="1">
        <name>FAD</name>
        <dbReference type="ChEBI" id="CHEBI:57692"/>
    </cofactor>
</comment>
<comment type="pathway">
    <text evidence="1">Nitrogen metabolism; nitric oxide reduction.</text>
</comment>
<comment type="subcellular location">
    <subcellularLocation>
        <location evidence="1">Cytoplasm</location>
    </subcellularLocation>
</comment>
<comment type="similarity">
    <text evidence="1">Belongs to the FAD-dependent oxidoreductase family.</text>
</comment>
<protein>
    <recommendedName>
        <fullName evidence="1">Nitric oxide reductase FlRd-NAD(+) reductase</fullName>
        <ecNumber evidence="1">1.18.1.-</ecNumber>
    </recommendedName>
    <alternativeName>
        <fullName evidence="1">Flavorubredoxin reductase</fullName>
        <shortName evidence="1">FlRd-reductase</shortName>
        <shortName evidence="1">FlavoRb reductase</shortName>
    </alternativeName>
</protein>
<feature type="chain" id="PRO_1000067510" description="Nitric oxide reductase FlRd-NAD(+) reductase">
    <location>
        <begin position="1"/>
        <end position="377"/>
    </location>
</feature>
<dbReference type="EC" id="1.18.1.-" evidence="1"/>
<dbReference type="EMBL" id="CP000802">
    <property type="protein sequence ID" value="ABV07092.1"/>
    <property type="molecule type" value="Genomic_DNA"/>
</dbReference>
<dbReference type="RefSeq" id="WP_000064700.1">
    <property type="nucleotide sequence ID" value="NC_009800.1"/>
</dbReference>
<dbReference type="SMR" id="A8A3I8"/>
<dbReference type="KEGG" id="ecx:EcHS_A2847"/>
<dbReference type="HOGENOM" id="CLU_003291_4_4_6"/>
<dbReference type="UniPathway" id="UPA00638"/>
<dbReference type="GO" id="GO:0005737">
    <property type="term" value="C:cytoplasm"/>
    <property type="evidence" value="ECO:0007669"/>
    <property type="project" value="UniProtKB-SubCell"/>
</dbReference>
<dbReference type="GO" id="GO:0016731">
    <property type="term" value="F:oxidoreductase activity, acting on iron-sulfur proteins as donors, NAD or NADP as acceptor"/>
    <property type="evidence" value="ECO:0007669"/>
    <property type="project" value="UniProtKB-UniRule"/>
</dbReference>
<dbReference type="FunFam" id="3.30.390.120:FF:000001">
    <property type="entry name" value="Nitric oxide reductase FlRd-NAD(+) reductase"/>
    <property type="match status" value="1"/>
</dbReference>
<dbReference type="FunFam" id="3.50.50.60:FF:000075">
    <property type="entry name" value="Nitric oxide reductase FlRd-NAD(+) reductase"/>
    <property type="match status" value="1"/>
</dbReference>
<dbReference type="Gene3D" id="3.30.390.120">
    <property type="match status" value="1"/>
</dbReference>
<dbReference type="Gene3D" id="3.50.50.60">
    <property type="entry name" value="FAD/NAD(P)-binding domain"/>
    <property type="match status" value="2"/>
</dbReference>
<dbReference type="HAMAP" id="MF_01313">
    <property type="entry name" value="NorW"/>
    <property type="match status" value="1"/>
</dbReference>
<dbReference type="InterPro" id="IPR050260">
    <property type="entry name" value="FAD-bd_OxRdtase"/>
</dbReference>
<dbReference type="InterPro" id="IPR036188">
    <property type="entry name" value="FAD/NAD-bd_sf"/>
</dbReference>
<dbReference type="InterPro" id="IPR023753">
    <property type="entry name" value="FAD/NAD-binding_dom"/>
</dbReference>
<dbReference type="InterPro" id="IPR023961">
    <property type="entry name" value="NO_rdtase_NorW"/>
</dbReference>
<dbReference type="InterPro" id="IPR041364">
    <property type="entry name" value="Rbx-bd"/>
</dbReference>
<dbReference type="NCBIfam" id="NF003437">
    <property type="entry name" value="PRK04965.1"/>
    <property type="match status" value="1"/>
</dbReference>
<dbReference type="PANTHER" id="PTHR43429:SF3">
    <property type="entry name" value="NITRITE REDUCTASE [NAD(P)H]"/>
    <property type="match status" value="1"/>
</dbReference>
<dbReference type="PANTHER" id="PTHR43429">
    <property type="entry name" value="PYRIDINE NUCLEOTIDE-DISULFIDE OXIDOREDUCTASE DOMAIN-CONTAINING"/>
    <property type="match status" value="1"/>
</dbReference>
<dbReference type="Pfam" id="PF07992">
    <property type="entry name" value="Pyr_redox_2"/>
    <property type="match status" value="1"/>
</dbReference>
<dbReference type="Pfam" id="PF18113">
    <property type="entry name" value="Rbx_binding"/>
    <property type="match status" value="1"/>
</dbReference>
<dbReference type="PRINTS" id="PR00368">
    <property type="entry name" value="FADPNR"/>
</dbReference>
<dbReference type="PRINTS" id="PR00411">
    <property type="entry name" value="PNDRDTASEI"/>
</dbReference>
<dbReference type="SUPFAM" id="SSF51905">
    <property type="entry name" value="FAD/NAD(P)-binding domain"/>
    <property type="match status" value="1"/>
</dbReference>
<reference key="1">
    <citation type="journal article" date="2008" name="J. Bacteriol.">
        <title>The pangenome structure of Escherichia coli: comparative genomic analysis of E. coli commensal and pathogenic isolates.</title>
        <authorList>
            <person name="Rasko D.A."/>
            <person name="Rosovitz M.J."/>
            <person name="Myers G.S.A."/>
            <person name="Mongodin E.F."/>
            <person name="Fricke W.F."/>
            <person name="Gajer P."/>
            <person name="Crabtree J."/>
            <person name="Sebaihia M."/>
            <person name="Thomson N.R."/>
            <person name="Chaudhuri R."/>
            <person name="Henderson I.R."/>
            <person name="Sperandio V."/>
            <person name="Ravel J."/>
        </authorList>
    </citation>
    <scope>NUCLEOTIDE SEQUENCE [LARGE SCALE GENOMIC DNA]</scope>
    <source>
        <strain>HS</strain>
    </source>
</reference>
<gene>
    <name evidence="1" type="primary">norW</name>
    <name evidence="1" type="synonym">flrR</name>
    <name type="ordered locus">EcHS_A2847</name>
</gene>